<sequence>MSSKVTSQHAEELSTGARTLGVNLTGTQHELLLGYLALLIKWNQAYNLTAVRDPDEMVSRHLLDSLSVMSFIENGRWLDVGSGGGMPGIPLAILYPDSQVTCLDSNGKKTRFLTQVKLELKLDNLQVIHSRVEAFQPAQPFNGIISRAFSSMENFTNWTRHLGDADTRWLAMKGVHPADELVALPADFKLDSEHALAVPGCQGQRHLLILRRTA</sequence>
<dbReference type="EC" id="2.1.1.170" evidence="1"/>
<dbReference type="EMBL" id="CP000094">
    <property type="protein sequence ID" value="ABA77473.1"/>
    <property type="molecule type" value="Genomic_DNA"/>
</dbReference>
<dbReference type="RefSeq" id="WP_011336721.1">
    <property type="nucleotide sequence ID" value="NC_007492.2"/>
</dbReference>
<dbReference type="SMR" id="Q3K431"/>
<dbReference type="KEGG" id="pfo:Pfl01_5740"/>
<dbReference type="eggNOG" id="COG0357">
    <property type="taxonomic scope" value="Bacteria"/>
</dbReference>
<dbReference type="HOGENOM" id="CLU_065341_2_2_6"/>
<dbReference type="Proteomes" id="UP000002704">
    <property type="component" value="Chromosome"/>
</dbReference>
<dbReference type="GO" id="GO:0005829">
    <property type="term" value="C:cytosol"/>
    <property type="evidence" value="ECO:0007669"/>
    <property type="project" value="TreeGrafter"/>
</dbReference>
<dbReference type="GO" id="GO:0070043">
    <property type="term" value="F:rRNA (guanine-N7-)-methyltransferase activity"/>
    <property type="evidence" value="ECO:0007669"/>
    <property type="project" value="UniProtKB-UniRule"/>
</dbReference>
<dbReference type="CDD" id="cd02440">
    <property type="entry name" value="AdoMet_MTases"/>
    <property type="match status" value="1"/>
</dbReference>
<dbReference type="Gene3D" id="3.40.50.150">
    <property type="entry name" value="Vaccinia Virus protein VP39"/>
    <property type="match status" value="1"/>
</dbReference>
<dbReference type="HAMAP" id="MF_00074">
    <property type="entry name" value="16SrRNA_methyltr_G"/>
    <property type="match status" value="1"/>
</dbReference>
<dbReference type="InterPro" id="IPR003682">
    <property type="entry name" value="rRNA_ssu_MeTfrase_G"/>
</dbReference>
<dbReference type="InterPro" id="IPR029063">
    <property type="entry name" value="SAM-dependent_MTases_sf"/>
</dbReference>
<dbReference type="NCBIfam" id="TIGR00138">
    <property type="entry name" value="rsmG_gidB"/>
    <property type="match status" value="1"/>
</dbReference>
<dbReference type="PANTHER" id="PTHR31760">
    <property type="entry name" value="S-ADENOSYL-L-METHIONINE-DEPENDENT METHYLTRANSFERASES SUPERFAMILY PROTEIN"/>
    <property type="match status" value="1"/>
</dbReference>
<dbReference type="PANTHER" id="PTHR31760:SF0">
    <property type="entry name" value="S-ADENOSYL-L-METHIONINE-DEPENDENT METHYLTRANSFERASES SUPERFAMILY PROTEIN"/>
    <property type="match status" value="1"/>
</dbReference>
<dbReference type="Pfam" id="PF02527">
    <property type="entry name" value="GidB"/>
    <property type="match status" value="1"/>
</dbReference>
<dbReference type="PIRSF" id="PIRSF003078">
    <property type="entry name" value="GidB"/>
    <property type="match status" value="1"/>
</dbReference>
<dbReference type="SUPFAM" id="SSF53335">
    <property type="entry name" value="S-adenosyl-L-methionine-dependent methyltransferases"/>
    <property type="match status" value="1"/>
</dbReference>
<feature type="chain" id="PRO_1000010188" description="Ribosomal RNA small subunit methyltransferase G">
    <location>
        <begin position="1"/>
        <end position="214"/>
    </location>
</feature>
<feature type="binding site" evidence="1">
    <location>
        <position position="81"/>
    </location>
    <ligand>
        <name>S-adenosyl-L-methionine</name>
        <dbReference type="ChEBI" id="CHEBI:59789"/>
    </ligand>
</feature>
<feature type="binding site" evidence="1">
    <location>
        <position position="86"/>
    </location>
    <ligand>
        <name>S-adenosyl-L-methionine</name>
        <dbReference type="ChEBI" id="CHEBI:59789"/>
    </ligand>
</feature>
<feature type="binding site" evidence="1">
    <location>
        <begin position="132"/>
        <end position="133"/>
    </location>
    <ligand>
        <name>S-adenosyl-L-methionine</name>
        <dbReference type="ChEBI" id="CHEBI:59789"/>
    </ligand>
</feature>
<feature type="binding site" evidence="1">
    <location>
        <position position="147"/>
    </location>
    <ligand>
        <name>S-adenosyl-L-methionine</name>
        <dbReference type="ChEBI" id="CHEBI:59789"/>
    </ligand>
</feature>
<gene>
    <name evidence="1" type="primary">rsmG</name>
    <name type="ordered locus">Pfl01_5740</name>
</gene>
<organism>
    <name type="scientific">Pseudomonas fluorescens (strain Pf0-1)</name>
    <dbReference type="NCBI Taxonomy" id="205922"/>
    <lineage>
        <taxon>Bacteria</taxon>
        <taxon>Pseudomonadati</taxon>
        <taxon>Pseudomonadota</taxon>
        <taxon>Gammaproteobacteria</taxon>
        <taxon>Pseudomonadales</taxon>
        <taxon>Pseudomonadaceae</taxon>
        <taxon>Pseudomonas</taxon>
    </lineage>
</organism>
<name>RSMG_PSEPF</name>
<accession>Q3K431</accession>
<comment type="function">
    <text evidence="1">Specifically methylates the N7 position of guanine in position 527 of 16S rRNA.</text>
</comment>
<comment type="catalytic activity">
    <reaction evidence="1">
        <text>guanosine(527) in 16S rRNA + S-adenosyl-L-methionine = N(7)-methylguanosine(527) in 16S rRNA + S-adenosyl-L-homocysteine</text>
        <dbReference type="Rhea" id="RHEA:42732"/>
        <dbReference type="Rhea" id="RHEA-COMP:10209"/>
        <dbReference type="Rhea" id="RHEA-COMP:10210"/>
        <dbReference type="ChEBI" id="CHEBI:57856"/>
        <dbReference type="ChEBI" id="CHEBI:59789"/>
        <dbReference type="ChEBI" id="CHEBI:74269"/>
        <dbReference type="ChEBI" id="CHEBI:74480"/>
        <dbReference type="EC" id="2.1.1.170"/>
    </reaction>
</comment>
<comment type="subcellular location">
    <subcellularLocation>
        <location evidence="1">Cytoplasm</location>
    </subcellularLocation>
</comment>
<comment type="similarity">
    <text evidence="1">Belongs to the methyltransferase superfamily. RNA methyltransferase RsmG family.</text>
</comment>
<evidence type="ECO:0000255" key="1">
    <source>
        <dbReference type="HAMAP-Rule" id="MF_00074"/>
    </source>
</evidence>
<protein>
    <recommendedName>
        <fullName evidence="1">Ribosomal RNA small subunit methyltransferase G</fullName>
        <ecNumber evidence="1">2.1.1.170</ecNumber>
    </recommendedName>
    <alternativeName>
        <fullName evidence="1">16S rRNA 7-methylguanosine methyltransferase</fullName>
        <shortName evidence="1">16S rRNA m7G methyltransferase</shortName>
    </alternativeName>
</protein>
<reference key="1">
    <citation type="journal article" date="2009" name="Genome Biol.">
        <title>Genomic and genetic analyses of diversity and plant interactions of Pseudomonas fluorescens.</title>
        <authorList>
            <person name="Silby M.W."/>
            <person name="Cerdeno-Tarraga A.M."/>
            <person name="Vernikos G.S."/>
            <person name="Giddens S.R."/>
            <person name="Jackson R.W."/>
            <person name="Preston G.M."/>
            <person name="Zhang X.-X."/>
            <person name="Moon C.D."/>
            <person name="Gehrig S.M."/>
            <person name="Godfrey S.A.C."/>
            <person name="Knight C.G."/>
            <person name="Malone J.G."/>
            <person name="Robinson Z."/>
            <person name="Spiers A.J."/>
            <person name="Harris S."/>
            <person name="Challis G.L."/>
            <person name="Yaxley A.M."/>
            <person name="Harris D."/>
            <person name="Seeger K."/>
            <person name="Murphy L."/>
            <person name="Rutter S."/>
            <person name="Squares R."/>
            <person name="Quail M.A."/>
            <person name="Saunders E."/>
            <person name="Mavromatis K."/>
            <person name="Brettin T.S."/>
            <person name="Bentley S.D."/>
            <person name="Hothersall J."/>
            <person name="Stephens E."/>
            <person name="Thomas C.M."/>
            <person name="Parkhill J."/>
            <person name="Levy S.B."/>
            <person name="Rainey P.B."/>
            <person name="Thomson N.R."/>
        </authorList>
    </citation>
    <scope>NUCLEOTIDE SEQUENCE [LARGE SCALE GENOMIC DNA]</scope>
    <source>
        <strain>Pf0-1</strain>
    </source>
</reference>
<proteinExistence type="inferred from homology"/>
<keyword id="KW-0963">Cytoplasm</keyword>
<keyword id="KW-0489">Methyltransferase</keyword>
<keyword id="KW-0698">rRNA processing</keyword>
<keyword id="KW-0949">S-adenosyl-L-methionine</keyword>
<keyword id="KW-0808">Transferase</keyword>